<sequence>MTTQYGFFIDSSRCAGCKTCELACKDYKDLTPEVSFRRIYEYAGGDWQEDNGVWHQNVFAYYLSISCNHCEDPACTKVCPSGAMHKREDGFVVVDEDVCIGCRYCHMACPYGAPQYNETKGHMTKCDGCYDRVAEGKKPICVESCPLRALDFGPIDELRKKHGDLAAVAPLPRAHFTKPNIVIKPNANSRPTGDTTGYLANPKEV</sequence>
<dbReference type="EMBL" id="AE005674">
    <property type="protein sequence ID" value="AAN42487.1"/>
    <property type="molecule type" value="Genomic_DNA"/>
</dbReference>
<dbReference type="EMBL" id="AE014073">
    <property type="protein sequence ID" value="AAP16359.1"/>
    <property type="molecule type" value="Genomic_DNA"/>
</dbReference>
<dbReference type="RefSeq" id="NP_706780.1">
    <property type="nucleotide sequence ID" value="NC_004337.2"/>
</dbReference>
<dbReference type="RefSeq" id="WP_000213013.1">
    <property type="nucleotide sequence ID" value="NZ_CP123365.1"/>
</dbReference>
<dbReference type="SMR" id="Q83RZ7"/>
<dbReference type="STRING" id="198214.SF0854"/>
<dbReference type="PaxDb" id="198214-SF0854"/>
<dbReference type="GeneID" id="1023813"/>
<dbReference type="KEGG" id="sfl:SF0854"/>
<dbReference type="KEGG" id="sfx:S0895"/>
<dbReference type="PATRIC" id="fig|198214.7.peg.985"/>
<dbReference type="HOGENOM" id="CLU_043374_2_0_6"/>
<dbReference type="Proteomes" id="UP000001006">
    <property type="component" value="Chromosome"/>
</dbReference>
<dbReference type="Proteomes" id="UP000002673">
    <property type="component" value="Chromosome"/>
</dbReference>
<dbReference type="GO" id="GO:0051539">
    <property type="term" value="F:4 iron, 4 sulfur cluster binding"/>
    <property type="evidence" value="ECO:0007669"/>
    <property type="project" value="UniProtKB-KW"/>
</dbReference>
<dbReference type="GO" id="GO:0046872">
    <property type="term" value="F:metal ion binding"/>
    <property type="evidence" value="ECO:0007669"/>
    <property type="project" value="UniProtKB-KW"/>
</dbReference>
<dbReference type="CDD" id="cd16371">
    <property type="entry name" value="DMSOR_beta_like"/>
    <property type="match status" value="1"/>
</dbReference>
<dbReference type="FunFam" id="3.30.70.20:FF:000003">
    <property type="entry name" value="Dimethyl sulfoxide reductase subunit B"/>
    <property type="match status" value="1"/>
</dbReference>
<dbReference type="Gene3D" id="3.30.70.20">
    <property type="match status" value="2"/>
</dbReference>
<dbReference type="InterPro" id="IPR017896">
    <property type="entry name" value="4Fe4S_Fe-S-bd"/>
</dbReference>
<dbReference type="InterPro" id="IPR017900">
    <property type="entry name" value="4Fe4S_Fe_S_CS"/>
</dbReference>
<dbReference type="InterPro" id="IPR014297">
    <property type="entry name" value="DMSO_DmsB"/>
</dbReference>
<dbReference type="InterPro" id="IPR050954">
    <property type="entry name" value="ET_IronSulfur_Cluster-Binding"/>
</dbReference>
<dbReference type="NCBIfam" id="TIGR02951">
    <property type="entry name" value="DMSO_dmsB"/>
    <property type="match status" value="1"/>
</dbReference>
<dbReference type="PANTHER" id="PTHR43177:SF5">
    <property type="entry name" value="ANAEROBIC DIMETHYL SULFOXIDE REDUCTASE CHAIN B-RELATED"/>
    <property type="match status" value="1"/>
</dbReference>
<dbReference type="PANTHER" id="PTHR43177">
    <property type="entry name" value="PROTEIN NRFC"/>
    <property type="match status" value="1"/>
</dbReference>
<dbReference type="Pfam" id="PF13247">
    <property type="entry name" value="Fer4_11"/>
    <property type="match status" value="1"/>
</dbReference>
<dbReference type="SUPFAM" id="SSF54862">
    <property type="entry name" value="4Fe-4S ferredoxins"/>
    <property type="match status" value="1"/>
</dbReference>
<dbReference type="PROSITE" id="PS00198">
    <property type="entry name" value="4FE4S_FER_1"/>
    <property type="match status" value="1"/>
</dbReference>
<dbReference type="PROSITE" id="PS51379">
    <property type="entry name" value="4FE4S_FER_2"/>
    <property type="match status" value="3"/>
</dbReference>
<gene>
    <name type="primary">dmsB</name>
    <name type="ordered locus">SF0854</name>
    <name type="ordered locus">S0895</name>
</gene>
<reference key="1">
    <citation type="journal article" date="2002" name="Nucleic Acids Res.">
        <title>Genome sequence of Shigella flexneri 2a: insights into pathogenicity through comparison with genomes of Escherichia coli K12 and O157.</title>
        <authorList>
            <person name="Jin Q."/>
            <person name="Yuan Z."/>
            <person name="Xu J."/>
            <person name="Wang Y."/>
            <person name="Shen Y."/>
            <person name="Lu W."/>
            <person name="Wang J."/>
            <person name="Liu H."/>
            <person name="Yang J."/>
            <person name="Yang F."/>
            <person name="Zhang X."/>
            <person name="Zhang J."/>
            <person name="Yang G."/>
            <person name="Wu H."/>
            <person name="Qu D."/>
            <person name="Dong J."/>
            <person name="Sun L."/>
            <person name="Xue Y."/>
            <person name="Zhao A."/>
            <person name="Gao Y."/>
            <person name="Zhu J."/>
            <person name="Kan B."/>
            <person name="Ding K."/>
            <person name="Chen S."/>
            <person name="Cheng H."/>
            <person name="Yao Z."/>
            <person name="He B."/>
            <person name="Chen R."/>
            <person name="Ma D."/>
            <person name="Qiang B."/>
            <person name="Wen Y."/>
            <person name="Hou Y."/>
            <person name="Yu J."/>
        </authorList>
    </citation>
    <scope>NUCLEOTIDE SEQUENCE [LARGE SCALE GENOMIC DNA]</scope>
    <source>
        <strain>301 / Serotype 2a</strain>
    </source>
</reference>
<reference key="2">
    <citation type="journal article" date="2003" name="Infect. Immun.">
        <title>Complete genome sequence and comparative genomics of Shigella flexneri serotype 2a strain 2457T.</title>
        <authorList>
            <person name="Wei J."/>
            <person name="Goldberg M.B."/>
            <person name="Burland V."/>
            <person name="Venkatesan M.M."/>
            <person name="Deng W."/>
            <person name="Fournier G."/>
            <person name="Mayhew G.F."/>
            <person name="Plunkett G. III"/>
            <person name="Rose D.J."/>
            <person name="Darling A."/>
            <person name="Mau B."/>
            <person name="Perna N.T."/>
            <person name="Payne S.M."/>
            <person name="Runyen-Janecky L.J."/>
            <person name="Zhou S."/>
            <person name="Schwartz D.C."/>
            <person name="Blattner F.R."/>
        </authorList>
    </citation>
    <scope>NUCLEOTIDE SEQUENCE [LARGE SCALE GENOMIC DNA]</scope>
    <source>
        <strain>ATCC 700930 / 2457T / Serotype 2a</strain>
    </source>
</reference>
<feature type="initiator methionine" description="Removed" evidence="1">
    <location>
        <position position="1"/>
    </location>
</feature>
<feature type="chain" id="PRO_0000159243" description="Anaerobic dimethyl sulfoxide reductase chain B">
    <location>
        <begin position="2"/>
        <end position="205"/>
    </location>
</feature>
<feature type="domain" description="4Fe-4S ferredoxin-type 1" evidence="2">
    <location>
        <begin position="5"/>
        <end position="33"/>
    </location>
</feature>
<feature type="domain" description="4Fe-4S ferredoxin-type 2" evidence="2">
    <location>
        <begin position="59"/>
        <end position="89"/>
    </location>
</feature>
<feature type="domain" description="4Fe-4S ferredoxin-type 3" evidence="2">
    <location>
        <begin position="90"/>
        <end position="119"/>
    </location>
</feature>
<feature type="region of interest" description="Disordered" evidence="3">
    <location>
        <begin position="184"/>
        <end position="205"/>
    </location>
</feature>
<feature type="compositionally biased region" description="Polar residues" evidence="3">
    <location>
        <begin position="186"/>
        <end position="195"/>
    </location>
</feature>
<feature type="binding site" evidence="1">
    <location>
        <position position="14"/>
    </location>
    <ligand>
        <name>[4Fe-4S] cluster</name>
        <dbReference type="ChEBI" id="CHEBI:49883"/>
        <label>1</label>
    </ligand>
</feature>
<feature type="binding site" evidence="1">
    <location>
        <position position="17"/>
    </location>
    <ligand>
        <name>[4Fe-4S] cluster</name>
        <dbReference type="ChEBI" id="CHEBI:49883"/>
        <label>1</label>
    </ligand>
</feature>
<feature type="binding site" evidence="1">
    <location>
        <position position="20"/>
    </location>
    <ligand>
        <name>[4Fe-4S] cluster</name>
        <dbReference type="ChEBI" id="CHEBI:49883"/>
        <label>1</label>
    </ligand>
</feature>
<feature type="binding site" evidence="1">
    <location>
        <position position="24"/>
    </location>
    <ligand>
        <name>[4Fe-4S] cluster</name>
        <dbReference type="ChEBI" id="CHEBI:49883"/>
        <label>2</label>
    </ligand>
</feature>
<feature type="binding site" evidence="1">
    <location>
        <position position="67"/>
    </location>
    <ligand>
        <name>[4Fe-4S] cluster</name>
        <dbReference type="ChEBI" id="CHEBI:49883"/>
        <label>3</label>
    </ligand>
</feature>
<feature type="binding site" evidence="1">
    <location>
        <position position="70"/>
    </location>
    <ligand>
        <name>[4Fe-4S] cluster</name>
        <dbReference type="ChEBI" id="CHEBI:49883"/>
        <label>3</label>
    </ligand>
</feature>
<feature type="binding site" evidence="1">
    <location>
        <position position="75"/>
    </location>
    <ligand>
        <name>[4Fe-4S] cluster</name>
        <dbReference type="ChEBI" id="CHEBI:49883"/>
        <label>3</label>
    </ligand>
</feature>
<feature type="binding site" evidence="1">
    <location>
        <position position="79"/>
    </location>
    <ligand>
        <name>[4Fe-4S] cluster</name>
        <dbReference type="ChEBI" id="CHEBI:49883"/>
        <label>4</label>
    </ligand>
</feature>
<feature type="binding site" evidence="1">
    <location>
        <position position="99"/>
    </location>
    <ligand>
        <name>[4Fe-4S] cluster</name>
        <dbReference type="ChEBI" id="CHEBI:49883"/>
        <label>4</label>
    </ligand>
</feature>
<feature type="binding site" evidence="1">
    <location>
        <position position="102"/>
    </location>
    <ligand>
        <name>[4Fe-4S] cluster</name>
        <dbReference type="ChEBI" id="CHEBI:49883"/>
        <label>4</label>
    </ligand>
</feature>
<feature type="binding site" evidence="1">
    <location>
        <position position="105"/>
    </location>
    <ligand>
        <name>[4Fe-4S] cluster</name>
        <dbReference type="ChEBI" id="CHEBI:49883"/>
        <label>4</label>
    </ligand>
</feature>
<feature type="binding site" evidence="1">
    <location>
        <position position="109"/>
    </location>
    <ligand>
        <name>[4Fe-4S] cluster</name>
        <dbReference type="ChEBI" id="CHEBI:49883"/>
        <label>3</label>
    </ligand>
</feature>
<feature type="binding site" evidence="1">
    <location>
        <position position="126"/>
    </location>
    <ligand>
        <name>[4Fe-4S] cluster</name>
        <dbReference type="ChEBI" id="CHEBI:49883"/>
        <label>2</label>
    </ligand>
</feature>
<feature type="binding site" evidence="1">
    <location>
        <position position="129"/>
    </location>
    <ligand>
        <name>[4Fe-4S] cluster</name>
        <dbReference type="ChEBI" id="CHEBI:49883"/>
        <label>2</label>
    </ligand>
</feature>
<feature type="binding site" evidence="1">
    <location>
        <position position="141"/>
    </location>
    <ligand>
        <name>[4Fe-4S] cluster</name>
        <dbReference type="ChEBI" id="CHEBI:49883"/>
        <label>2</label>
    </ligand>
</feature>
<feature type="binding site" evidence="1">
    <location>
        <position position="145"/>
    </location>
    <ligand>
        <name>[4Fe-4S] cluster</name>
        <dbReference type="ChEBI" id="CHEBI:49883"/>
        <label>1</label>
    </ligand>
</feature>
<feature type="sequence conflict" description="In Ref. 2; AAP16359." evidence="4" ref="2">
    <original>A</original>
    <variation>T</variation>
    <location>
        <position position="15"/>
    </location>
</feature>
<accession>Q83RZ7</accession>
<organism>
    <name type="scientific">Shigella flexneri</name>
    <dbReference type="NCBI Taxonomy" id="623"/>
    <lineage>
        <taxon>Bacteria</taxon>
        <taxon>Pseudomonadati</taxon>
        <taxon>Pseudomonadota</taxon>
        <taxon>Gammaproteobacteria</taxon>
        <taxon>Enterobacterales</taxon>
        <taxon>Enterobacteriaceae</taxon>
        <taxon>Shigella</taxon>
    </lineage>
</organism>
<name>DMSB_SHIFL</name>
<keyword id="KW-0004">4Fe-4S</keyword>
<keyword id="KW-0249">Electron transport</keyword>
<keyword id="KW-0408">Iron</keyword>
<keyword id="KW-0411">Iron-sulfur</keyword>
<keyword id="KW-0479">Metal-binding</keyword>
<keyword id="KW-1185">Reference proteome</keyword>
<keyword id="KW-0677">Repeat</keyword>
<keyword id="KW-0813">Transport</keyword>
<comment type="function">
    <text evidence="1">Electron transfer subunit of the terminal reductase during anaerobic growth on various sulfoxide and N-oxide compounds.</text>
</comment>
<comment type="cofactor">
    <cofactor evidence="1">
        <name>[4Fe-4S] cluster</name>
        <dbReference type="ChEBI" id="CHEBI:49883"/>
    </cofactor>
    <text evidence="1">Binds 4 [4Fe-4S] clusters.</text>
</comment>
<comment type="subunit">
    <text evidence="1">Heterotrimeric enzyme composed of a catalytic heterodimer (DmsAB) and a membrane anchor protein (DmsC).</text>
</comment>
<protein>
    <recommendedName>
        <fullName>Anaerobic dimethyl sulfoxide reductase chain B</fullName>
    </recommendedName>
    <alternativeName>
        <fullName>DMSO reductase iron-sulfur subunit</fullName>
    </alternativeName>
</protein>
<evidence type="ECO:0000250" key="1"/>
<evidence type="ECO:0000255" key="2">
    <source>
        <dbReference type="PROSITE-ProRule" id="PRU00711"/>
    </source>
</evidence>
<evidence type="ECO:0000256" key="3">
    <source>
        <dbReference type="SAM" id="MobiDB-lite"/>
    </source>
</evidence>
<evidence type="ECO:0000305" key="4"/>
<proteinExistence type="inferred from homology"/>